<keyword id="KW-0903">Direct protein sequencing</keyword>
<keyword id="KW-1015">Disulfide bond</keyword>
<keyword id="KW-0960">Knottin</keyword>
<keyword id="KW-0611">Plant defense</keyword>
<reference evidence="5" key="1">
    <citation type="journal article" date="2020" name="J. Biol. Chem.">
        <title>Discovery and mechanistic studies of cytotoxic cyclotides from the medicinal herb Hybanthus enneaspermus.</title>
        <authorList>
            <person name="Du Q."/>
            <person name="Chan L.Y."/>
            <person name="Gilding E.K."/>
            <person name="Henriques S.T."/>
            <person name="Condon N.D."/>
            <person name="Ravipati A.S."/>
            <person name="Kaas Q."/>
            <person name="Huang Y.H."/>
            <person name="Craik D.J."/>
        </authorList>
    </citation>
    <scope>PROTEIN SEQUENCE</scope>
    <scope>MASS SPECTROMETRY</scope>
    <scope>TISSUE SPECIFICITY</scope>
    <scope>DISULFIDE BONDS</scope>
</reference>
<organism evidence="4">
    <name type="scientific">Pigea enneasperma</name>
    <name type="common">Spade flower</name>
    <name type="synonym">Afrohybanthus enneaspermus</name>
    <dbReference type="NCBI Taxonomy" id="212266"/>
    <lineage>
        <taxon>Eukaryota</taxon>
        <taxon>Viridiplantae</taxon>
        <taxon>Streptophyta</taxon>
        <taxon>Embryophyta</taxon>
        <taxon>Tracheophyta</taxon>
        <taxon>Spermatophyta</taxon>
        <taxon>Magnoliopsida</taxon>
        <taxon>eudicotyledons</taxon>
        <taxon>Gunneridae</taxon>
        <taxon>Pentapetalae</taxon>
        <taxon>rosids</taxon>
        <taxon>fabids</taxon>
        <taxon>Malpighiales</taxon>
        <taxon>Violaceae</taxon>
        <taxon>Pigea</taxon>
    </lineage>
</organism>
<sequence>GIPCGESCIFIPCITTVVGCSCSNKVCYDN</sequence>
<proteinExistence type="evidence at protein level"/>
<name>CYHEK_PIGEN</name>
<dbReference type="SMR" id="C0HLP5"/>
<dbReference type="GO" id="GO:0051715">
    <property type="term" value="P:cytolysis in another organism"/>
    <property type="evidence" value="ECO:0000314"/>
    <property type="project" value="UniProtKB"/>
</dbReference>
<dbReference type="GO" id="GO:0006952">
    <property type="term" value="P:defense response"/>
    <property type="evidence" value="ECO:0000314"/>
    <property type="project" value="UniProtKB"/>
</dbReference>
<dbReference type="InterPro" id="IPR005535">
    <property type="entry name" value="Cyclotide"/>
</dbReference>
<dbReference type="InterPro" id="IPR036146">
    <property type="entry name" value="Cyclotide_sf"/>
</dbReference>
<dbReference type="Pfam" id="PF03784">
    <property type="entry name" value="Cyclotide"/>
    <property type="match status" value="1"/>
</dbReference>
<dbReference type="PIRSF" id="PIRSF037891">
    <property type="entry name" value="Cycloviolacin"/>
    <property type="match status" value="1"/>
</dbReference>
<dbReference type="SUPFAM" id="SSF57038">
    <property type="entry name" value="Cyclotides"/>
    <property type="match status" value="1"/>
</dbReference>
<dbReference type="PROSITE" id="PS51052">
    <property type="entry name" value="CYCLOTIDE"/>
    <property type="match status" value="1"/>
</dbReference>
<evidence type="ECO:0000250" key="1">
    <source>
        <dbReference type="UniProtKB" id="C0HKI7"/>
    </source>
</evidence>
<evidence type="ECO:0000255" key="2">
    <source>
        <dbReference type="PROSITE-ProRule" id="PRU00395"/>
    </source>
</evidence>
<evidence type="ECO:0000269" key="3">
    <source>
    </source>
</evidence>
<evidence type="ECO:0000303" key="4">
    <source>
    </source>
</evidence>
<evidence type="ECO:0000305" key="5"/>
<accession>C0HLP5</accession>
<comment type="function">
    <text evidence="2">Probably participates in a plant defense mechanism.</text>
</comment>
<comment type="tissue specificity">
    <text evidence="3">Detected in seeds (at protein level).</text>
</comment>
<comment type="domain">
    <text evidence="5">The presence of a 'disulfide through disulfide knot' structurally defines this protein as a knottin.</text>
</comment>
<comment type="PTM">
    <text evidence="2">This is a cyclic peptide.</text>
</comment>
<comment type="mass spectrometry"/>
<comment type="similarity">
    <text evidence="2">Belongs to the cyclotide family.</text>
</comment>
<comment type="caution">
    <text evidence="2">This peptide is cyclic. The start position was chosen by similarity to Oak1 (kalata B1) for which the DNA sequence is known.</text>
</comment>
<protein>
    <recommendedName>
        <fullName evidence="4">Cyclotide hyen-K</fullName>
    </recommendedName>
</protein>
<feature type="peptide" id="PRO_0000450767" description="Cyclotide hyen-K" evidence="2">
    <location>
        <begin position="1"/>
        <end position="30"/>
    </location>
</feature>
<feature type="disulfide bond" evidence="2 3">
    <location>
        <begin position="4"/>
        <end position="20"/>
    </location>
</feature>
<feature type="disulfide bond" evidence="2 3">
    <location>
        <begin position="8"/>
        <end position="22"/>
    </location>
</feature>
<feature type="disulfide bond" evidence="2 3">
    <location>
        <begin position="13"/>
        <end position="27"/>
    </location>
</feature>
<feature type="cross-link" description="Cyclopeptide (Gly-Asn)" evidence="1">
    <location>
        <begin position="1"/>
        <end position="30"/>
    </location>
</feature>